<reference key="1">
    <citation type="journal article" date="2003" name="Proc. Natl. Acad. Sci. U.S.A.">
        <title>The genome sequence of Blochmannia floridanus: comparative analysis of reduced genomes.</title>
        <authorList>
            <person name="Gil R."/>
            <person name="Silva F.J."/>
            <person name="Zientz E."/>
            <person name="Delmotte F."/>
            <person name="Gonzalez-Candelas F."/>
            <person name="Latorre A."/>
            <person name="Rausell C."/>
            <person name="Kamerbeek J."/>
            <person name="Gadau J."/>
            <person name="Hoelldobler B."/>
            <person name="van Ham R.C.H.J."/>
            <person name="Gross R."/>
            <person name="Moya A."/>
        </authorList>
    </citation>
    <scope>NUCLEOTIDE SEQUENCE [LARGE SCALE GENOMIC DNA]</scope>
</reference>
<proteinExistence type="inferred from homology"/>
<protein>
    <recommendedName>
        <fullName evidence="1">Large ribosomal subunit protein bL9</fullName>
    </recommendedName>
    <alternativeName>
        <fullName evidence="2">50S ribosomal protein L9</fullName>
    </alternativeName>
</protein>
<gene>
    <name evidence="1" type="primary">rplI</name>
    <name type="ordered locus">Bfl087</name>
</gene>
<comment type="function">
    <text evidence="1">Binds to the 23S rRNA.</text>
</comment>
<comment type="similarity">
    <text evidence="1">Belongs to the bacterial ribosomal protein bL9 family.</text>
</comment>
<sequence>MKVILLDSIDKVGKIGSEIIVKSGYARNFLFPKSKAVLSTKKNLAIFKKQQHILKSNLDSKRLKAEFRAKAINDLGSITITVKSSIHGKLFGSIGSRDIAKLITESVGFEVHKSQIRLPNRDALKSIGEHNVCIHVYNEIYANLTVHILNSVLFQDKSKKS</sequence>
<dbReference type="EMBL" id="BX248583">
    <property type="protein sequence ID" value="CAD83610.1"/>
    <property type="molecule type" value="Genomic_DNA"/>
</dbReference>
<dbReference type="SMR" id="Q7VQN7"/>
<dbReference type="STRING" id="203907.Bfl087"/>
<dbReference type="KEGG" id="bfl:Bfl087"/>
<dbReference type="eggNOG" id="COG0359">
    <property type="taxonomic scope" value="Bacteria"/>
</dbReference>
<dbReference type="HOGENOM" id="CLU_078938_5_1_6"/>
<dbReference type="OrthoDB" id="9788336at2"/>
<dbReference type="Proteomes" id="UP000002192">
    <property type="component" value="Chromosome"/>
</dbReference>
<dbReference type="GO" id="GO:1990904">
    <property type="term" value="C:ribonucleoprotein complex"/>
    <property type="evidence" value="ECO:0007669"/>
    <property type="project" value="UniProtKB-KW"/>
</dbReference>
<dbReference type="GO" id="GO:0005840">
    <property type="term" value="C:ribosome"/>
    <property type="evidence" value="ECO:0007669"/>
    <property type="project" value="UniProtKB-KW"/>
</dbReference>
<dbReference type="GO" id="GO:0019843">
    <property type="term" value="F:rRNA binding"/>
    <property type="evidence" value="ECO:0007669"/>
    <property type="project" value="UniProtKB-UniRule"/>
</dbReference>
<dbReference type="GO" id="GO:0003735">
    <property type="term" value="F:structural constituent of ribosome"/>
    <property type="evidence" value="ECO:0007669"/>
    <property type="project" value="InterPro"/>
</dbReference>
<dbReference type="GO" id="GO:0006412">
    <property type="term" value="P:translation"/>
    <property type="evidence" value="ECO:0007669"/>
    <property type="project" value="UniProtKB-UniRule"/>
</dbReference>
<dbReference type="Gene3D" id="3.10.430.100">
    <property type="entry name" value="Ribosomal protein L9, C-terminal domain"/>
    <property type="match status" value="1"/>
</dbReference>
<dbReference type="Gene3D" id="3.40.5.10">
    <property type="entry name" value="Ribosomal protein L9, N-terminal domain"/>
    <property type="match status" value="1"/>
</dbReference>
<dbReference type="HAMAP" id="MF_00503">
    <property type="entry name" value="Ribosomal_bL9"/>
    <property type="match status" value="1"/>
</dbReference>
<dbReference type="InterPro" id="IPR000244">
    <property type="entry name" value="Ribosomal_bL9"/>
</dbReference>
<dbReference type="InterPro" id="IPR009027">
    <property type="entry name" value="Ribosomal_bL9/RNase_H1_N"/>
</dbReference>
<dbReference type="InterPro" id="IPR020594">
    <property type="entry name" value="Ribosomal_bL9_bac/chp"/>
</dbReference>
<dbReference type="InterPro" id="IPR020069">
    <property type="entry name" value="Ribosomal_bL9_C"/>
</dbReference>
<dbReference type="InterPro" id="IPR036791">
    <property type="entry name" value="Ribosomal_bL9_C_sf"/>
</dbReference>
<dbReference type="InterPro" id="IPR020070">
    <property type="entry name" value="Ribosomal_bL9_N"/>
</dbReference>
<dbReference type="InterPro" id="IPR036935">
    <property type="entry name" value="Ribosomal_bL9_N_sf"/>
</dbReference>
<dbReference type="NCBIfam" id="TIGR00158">
    <property type="entry name" value="L9"/>
    <property type="match status" value="1"/>
</dbReference>
<dbReference type="PANTHER" id="PTHR21368">
    <property type="entry name" value="50S RIBOSOMAL PROTEIN L9"/>
    <property type="match status" value="1"/>
</dbReference>
<dbReference type="Pfam" id="PF03948">
    <property type="entry name" value="Ribosomal_L9_C"/>
    <property type="match status" value="1"/>
</dbReference>
<dbReference type="Pfam" id="PF01281">
    <property type="entry name" value="Ribosomal_L9_N"/>
    <property type="match status" value="1"/>
</dbReference>
<dbReference type="SUPFAM" id="SSF55658">
    <property type="entry name" value="L9 N-domain-like"/>
    <property type="match status" value="1"/>
</dbReference>
<dbReference type="SUPFAM" id="SSF55653">
    <property type="entry name" value="Ribosomal protein L9 C-domain"/>
    <property type="match status" value="1"/>
</dbReference>
<dbReference type="PROSITE" id="PS00651">
    <property type="entry name" value="RIBOSOMAL_L9"/>
    <property type="match status" value="1"/>
</dbReference>
<feature type="chain" id="PRO_0000236487" description="Large ribosomal subunit protein bL9">
    <location>
        <begin position="1"/>
        <end position="161"/>
    </location>
</feature>
<organism>
    <name type="scientific">Blochmanniella floridana</name>
    <dbReference type="NCBI Taxonomy" id="203907"/>
    <lineage>
        <taxon>Bacteria</taxon>
        <taxon>Pseudomonadati</taxon>
        <taxon>Pseudomonadota</taxon>
        <taxon>Gammaproteobacteria</taxon>
        <taxon>Enterobacterales</taxon>
        <taxon>Enterobacteriaceae</taxon>
        <taxon>ant endosymbionts</taxon>
        <taxon>Candidatus Blochmanniella</taxon>
    </lineage>
</organism>
<keyword id="KW-1185">Reference proteome</keyword>
<keyword id="KW-0687">Ribonucleoprotein</keyword>
<keyword id="KW-0689">Ribosomal protein</keyword>
<keyword id="KW-0694">RNA-binding</keyword>
<keyword id="KW-0699">rRNA-binding</keyword>
<evidence type="ECO:0000255" key="1">
    <source>
        <dbReference type="HAMAP-Rule" id="MF_00503"/>
    </source>
</evidence>
<evidence type="ECO:0000305" key="2"/>
<accession>Q7VQN7</accession>
<name>RL9_BLOFL</name>